<reference key="1">
    <citation type="journal article" date="2006" name="Science">
        <title>Chimpanzee reservoirs of pandemic and nonpandemic HIV-1.</title>
        <authorList>
            <person name="Keele B.F."/>
            <person name="Van Heuverswyn F."/>
            <person name="Li Y."/>
            <person name="Bailes E."/>
            <person name="Takehisa J."/>
            <person name="Santiago M.L."/>
            <person name="Bibollet-Ruche F."/>
            <person name="Chen Y."/>
            <person name="Wain L.V."/>
            <person name="Liegeois F."/>
            <person name="Loul S."/>
            <person name="Ngole E.M."/>
            <person name="Bienvenue Y."/>
            <person name="Delaporte E."/>
            <person name="Brookfield J.F."/>
            <person name="Sharp P.M."/>
            <person name="Shaw G.M."/>
            <person name="Peeters M."/>
            <person name="Hahn B.H."/>
        </authorList>
    </citation>
    <scope>NUCLEOTIDE SEQUENCE [GENOMIC RNA]</scope>
</reference>
<organismHost>
    <name type="scientific">Pan troglodytes</name>
    <name type="common">Chimpanzee</name>
    <dbReference type="NCBI Taxonomy" id="9598"/>
</organismHost>
<proteinExistence type="inferred from homology"/>
<sequence>MGARASVLTGGKLDRWEKIYLRPGGKKKYMMKHLVWASRELERFACNPSLMETTEGCKQLLQQLEPALKTGSEGLRSLFNTIVVLWCVHQGIPVKDTKEALDQLQEAQQKGKQEVAAATADGTSTVSRNFPIVANAQGQMVHQPISPRTLNAWVKVVEEKAFSPEVIPMFMALSEGATPQDLNTMLNTVGGHQAAMQMLKEVINEEAAEWDRLHPVHAGPVPPGQMREPRGSDIAGTTSTIQEQVGWMTSNPPIPVGDIYKRWIILGLNKIVKMYCPVSILDIKQGPKESFRDYVDRFYKTLRAEQATQEVKNWMTDTLLVQNANPDCKSILRALGPGATLEGDEPAFQGVGGPSHKARVLAEAMSQAQHSNDAKRQFKGPKRIVKCFNCGKEGHIARNCKAPRRKGCWKCGQEGHQMRNCTNERQANFFRETLAFQQGKAREFPSEETRTNSSTNRELRVQGGGTCPEGGSEERGDREQAVSSANFPQISLWQRPVVTVRIEGQLKEALLDTGADDTVLEEIELGGRWKPKMIGGIGGFIKVRQYDNVTIDICGKRAVGTVLVGPTPVNIIGRNILTQIGCTLNFPISPIETVPVSLKPGMDGPRVKQWPLTEEKIRALTEICTEMEKEGKISRVGPENPYNTPIFAIKKKDSTKWRKLVDFRELNKRTQDFWEVQLGIPHPAGLKQKKSVTVLDVGDAYFSCPLDENFRKYTAFTIPSVNNETPGIRYQYNVLPQGWKGSPAIFQSSMTKILEPFRKQNPEIIIYQYMDDLYVGSDLKIELHREKVEELRAHLLKWGFTTPDKKHQKEPPFLWMGYELHPDKWTVQPIQLPEKESWTVNDIQKLIGKLNWACQIYPGIRVKQLCKLIRGTKALTEVVTFTTEAELELAENREILKEPVHGAYYDPSKELIAEIQKQGQGQWTYQIFQEQYKNLKTGKYARMRSAHTNDVKQLTEVVQKVALESIVIWGKVPRFRLPIQKETWEAWWTDYWQATWIPEWEYVNTPPLVKLWYQLEQDPIPGAETFYVDGAANRETKLGKAGYVTDKGRQKIISLTETTNQKAELQAIQLALQDSEVEVNIVTDSQYALGIIQGQPDTSESEIVNQIIEELIKKEKVYLSWVPAHKGIGGNEQIDKLVSSGIRKVLFLDGIDKAQEEHEKYHNNWRAMASDFNLPPIVAKEIVANCDKCQLKGEAIHGQVDCSPGIWQLDCTHLEGKIILVAVHVASGYMEAEVIPAETGQETAYFILKLAGRWPVKVIHTDNGSNFTSSTVKAACWWAGIQQEFGIPYNPQSQGVVESMNKELKKIIGQIRDQAEHLKTAVQMAVFIHNFKRKGGIGGYSAGERIIDILATDIQTTKLQQQISNIQKFRVYYRDSRDPIWKGPAKLLWKGEGAVVLQDQEEIKVVPRRKAKIIRDYGKQMAGDDCVASRQDENQNME</sequence>
<protein>
    <recommendedName>
        <fullName>Gag-Pol polyprotein</fullName>
    </recommendedName>
    <alternativeName>
        <fullName>Pr160Gag-Pol</fullName>
    </alternativeName>
    <component>
        <recommendedName>
            <fullName>Matrix protein p17</fullName>
            <shortName>MA</shortName>
        </recommendedName>
    </component>
    <component>
        <recommendedName>
            <fullName>Capsid protein p24</fullName>
            <shortName>CA</shortName>
        </recommendedName>
    </component>
    <component>
        <recommendedName>
            <fullName>Nucleocapsid protein p7</fullName>
            <shortName>NC</shortName>
        </recommendedName>
    </component>
    <component>
        <recommendedName>
            <fullName>p6-pol</fullName>
            <shortName>p6*</shortName>
        </recommendedName>
    </component>
    <component>
        <recommendedName>
            <fullName>Protease</fullName>
            <ecNumber>3.4.23.16</ecNumber>
        </recommendedName>
        <alternativeName>
            <fullName>PR</fullName>
        </alternativeName>
        <alternativeName>
            <fullName>Retropepsin</fullName>
        </alternativeName>
    </component>
    <component>
        <recommendedName>
            <fullName>Reverse transcriptase/ribonuclease H</fullName>
            <ecNumber>2.7.7.49</ecNumber>
            <ecNumber>2.7.7.7</ecNumber>
            <ecNumber>3.1.26.13</ecNumber>
        </recommendedName>
        <alternativeName>
            <fullName>Exoribonuclease H</fullName>
            <ecNumber>3.1.13.2</ecNumber>
        </alternativeName>
        <alternativeName>
            <fullName>p66 RT</fullName>
        </alternativeName>
    </component>
    <component>
        <recommendedName>
            <fullName>p51 RT</fullName>
        </recommendedName>
    </component>
    <component>
        <recommendedName>
            <fullName>p15</fullName>
        </recommendedName>
    </component>
    <component>
        <recommendedName>
            <fullName>Integrase</fullName>
            <shortName>IN</shortName>
            <ecNumber evidence="4">2.7.7.-</ecNumber>
            <ecNumber evidence="4">3.1.-.-</ecNumber>
        </recommendedName>
    </component>
</protein>
<organism>
    <name type="scientific">Simian immunodeficiency virus (isolate MB66)</name>
    <name type="common">SIV-cpz</name>
    <name type="synonym">Chimpanzee immunodeficiency virus</name>
    <dbReference type="NCBI Taxonomy" id="388911"/>
    <lineage>
        <taxon>Viruses</taxon>
        <taxon>Riboviria</taxon>
        <taxon>Pararnavirae</taxon>
        <taxon>Artverviricota</taxon>
        <taxon>Revtraviricetes</taxon>
        <taxon>Ortervirales</taxon>
        <taxon>Retroviridae</taxon>
        <taxon>Orthoretrovirinae</taxon>
        <taxon>Lentivirus</taxon>
        <taxon>Simian immunodeficiency virus</taxon>
    </lineage>
</organism>
<gene>
    <name type="primary">gag-pol</name>
</gene>
<keyword id="KW-0064">Aspartyl protease</keyword>
<keyword id="KW-0167">Capsid protein</keyword>
<keyword id="KW-0229">DNA integration</keyword>
<keyword id="KW-0233">DNA recombination</keyword>
<keyword id="KW-0238">DNA-binding</keyword>
<keyword id="KW-0239">DNA-directed DNA polymerase</keyword>
<keyword id="KW-0255">Endonuclease</keyword>
<keyword id="KW-1262">Eukaryotic host gene expression shutoff by virus</keyword>
<keyword id="KW-1193">Eukaryotic host translation shutoff by virus</keyword>
<keyword id="KW-1032">Host cell membrane</keyword>
<keyword id="KW-1035">Host cytoplasm</keyword>
<keyword id="KW-1190">Host gene expression shutoff by virus</keyword>
<keyword id="KW-1043">Host membrane</keyword>
<keyword id="KW-1048">Host nucleus</keyword>
<keyword id="KW-0945">Host-virus interaction</keyword>
<keyword id="KW-0378">Hydrolase</keyword>
<keyword id="KW-0449">Lipoprotein</keyword>
<keyword id="KW-0460">Magnesium</keyword>
<keyword id="KW-0472">Membrane</keyword>
<keyword id="KW-0479">Metal-binding</keyword>
<keyword id="KW-0511">Multifunctional enzyme</keyword>
<keyword id="KW-0519">Myristate</keyword>
<keyword id="KW-0540">Nuclease</keyword>
<keyword id="KW-0548">Nucleotidyltransferase</keyword>
<keyword id="KW-0597">Phosphoprotein</keyword>
<keyword id="KW-0645">Protease</keyword>
<keyword id="KW-1185">Reference proteome</keyword>
<keyword id="KW-0677">Repeat</keyword>
<keyword id="KW-0688">Ribosomal frameshifting</keyword>
<keyword id="KW-0694">RNA-binding</keyword>
<keyword id="KW-0695">RNA-directed DNA polymerase</keyword>
<keyword id="KW-0808">Transferase</keyword>
<keyword id="KW-1179">Viral genome integration</keyword>
<keyword id="KW-0543">Viral nucleoprotein</keyword>
<keyword id="KW-1163">Viral penetration into host nucleus</keyword>
<keyword id="KW-1188">Viral release from host cell</keyword>
<keyword id="KW-0946">Virion</keyword>
<keyword id="KW-0917">Virion maturation</keyword>
<keyword id="KW-1160">Virus entry into host cell</keyword>
<keyword id="KW-0862">Zinc</keyword>
<keyword id="KW-0863">Zinc-finger</keyword>
<feature type="initiator methionine" description="Removed; by host" evidence="1">
    <location>
        <position position="1"/>
    </location>
</feature>
<feature type="chain" id="PRO_0000261303" description="Gag-Pol polyprotein">
    <location>
        <begin position="2"/>
        <end position="1438"/>
    </location>
</feature>
<feature type="chain" id="PRO_0000249385" description="Matrix protein p17" evidence="1">
    <location>
        <begin position="2"/>
        <end position="130"/>
    </location>
</feature>
<feature type="chain" id="PRO_0000249386" description="Capsid protein p24" evidence="1">
    <location>
        <begin position="131"/>
        <end position="361"/>
    </location>
</feature>
<feature type="chain" id="PRO_0000249387" description="Nucleocapsid protein p7" evidence="1">
    <location>
        <begin position="362"/>
        <end position="428"/>
    </location>
</feature>
<feature type="chain" id="PRO_0000249389" description="p6-pol" evidence="8">
    <location>
        <begin position="429"/>
        <end position="487"/>
    </location>
</feature>
<feature type="chain" id="PRO_0000249390" description="Protease" evidence="1">
    <location>
        <begin position="488"/>
        <end position="586"/>
    </location>
</feature>
<feature type="chain" id="PRO_0000249391" description="Reverse transcriptase/ribonuclease H" evidence="1">
    <location>
        <begin position="587"/>
        <end position="1146"/>
    </location>
</feature>
<feature type="chain" id="PRO_0000249392" description="p51 RT" evidence="1">
    <location>
        <begin position="587"/>
        <end position="1026"/>
    </location>
</feature>
<feature type="chain" id="PRO_0000249393" description="p15" evidence="1">
    <location>
        <begin position="1027"/>
        <end position="1146"/>
    </location>
</feature>
<feature type="chain" id="PRO_0000249394" description="Integrase" evidence="1">
    <location>
        <begin position="1147"/>
        <end position="1438"/>
    </location>
</feature>
<feature type="domain" description="Peptidase A2" evidence="10">
    <location>
        <begin position="507"/>
        <end position="576"/>
    </location>
</feature>
<feature type="domain" description="Reverse transcriptase" evidence="11">
    <location>
        <begin position="630"/>
        <end position="820"/>
    </location>
</feature>
<feature type="domain" description="RNase H type-1" evidence="12">
    <location>
        <begin position="1020"/>
        <end position="1143"/>
    </location>
</feature>
<feature type="domain" description="Integrase catalytic" evidence="14">
    <location>
        <begin position="1200"/>
        <end position="1350"/>
    </location>
</feature>
<feature type="zinc finger region" description="CCHC-type 1" evidence="9">
    <location>
        <begin position="385"/>
        <end position="402"/>
    </location>
</feature>
<feature type="zinc finger region" description="CCHC-type 2" evidence="9">
    <location>
        <begin position="406"/>
        <end position="423"/>
    </location>
</feature>
<feature type="zinc finger region" description="Integrase-type" evidence="13">
    <location>
        <begin position="1149"/>
        <end position="1190"/>
    </location>
</feature>
<feature type="DNA-binding region" description="Integrase-type" evidence="15">
    <location>
        <begin position="1369"/>
        <end position="1416"/>
    </location>
</feature>
<feature type="region of interest" description="Disordered" evidence="17">
    <location>
        <begin position="439"/>
        <end position="481"/>
    </location>
</feature>
<feature type="region of interest" description="RT 'primer grip'" evidence="1">
    <location>
        <begin position="813"/>
        <end position="821"/>
    </location>
</feature>
<feature type="short sequence motif" description="Nuclear export signal" evidence="1">
    <location>
        <begin position="16"/>
        <end position="22"/>
    </location>
</feature>
<feature type="short sequence motif" description="Nuclear localization signal" evidence="1">
    <location>
        <begin position="26"/>
        <end position="32"/>
    </location>
</feature>
<feature type="short sequence motif" description="Tryptophan repeat motif" evidence="1">
    <location>
        <begin position="984"/>
        <end position="1000"/>
    </location>
</feature>
<feature type="compositionally biased region" description="Basic and acidic residues" evidence="17">
    <location>
        <begin position="440"/>
        <end position="450"/>
    </location>
</feature>
<feature type="active site" description="For protease activity; shared with dimeric partner" evidence="16">
    <location>
        <position position="512"/>
    </location>
</feature>
<feature type="binding site" evidence="1">
    <location>
        <position position="696"/>
    </location>
    <ligand>
        <name>Mg(2+)</name>
        <dbReference type="ChEBI" id="CHEBI:18420"/>
        <label>1</label>
        <note>catalytic; for reverse transcriptase activity</note>
    </ligand>
</feature>
<feature type="binding site" evidence="1">
    <location>
        <position position="771"/>
    </location>
    <ligand>
        <name>Mg(2+)</name>
        <dbReference type="ChEBI" id="CHEBI:18420"/>
        <label>1</label>
        <note>catalytic; for reverse transcriptase activity</note>
    </ligand>
</feature>
<feature type="binding site" evidence="1">
    <location>
        <position position="772"/>
    </location>
    <ligand>
        <name>Mg(2+)</name>
        <dbReference type="ChEBI" id="CHEBI:18420"/>
        <label>1</label>
        <note>catalytic; for reverse transcriptase activity</note>
    </ligand>
</feature>
<feature type="binding site" evidence="1">
    <location>
        <position position="1029"/>
    </location>
    <ligand>
        <name>Mg(2+)</name>
        <dbReference type="ChEBI" id="CHEBI:18420"/>
        <label>2</label>
        <note>catalytic; for RNase H activity</note>
    </ligand>
</feature>
<feature type="binding site" evidence="1">
    <location>
        <position position="1064"/>
    </location>
    <ligand>
        <name>Mg(2+)</name>
        <dbReference type="ChEBI" id="CHEBI:18420"/>
        <label>2</label>
        <note>catalytic; for RNase H activity</note>
    </ligand>
</feature>
<feature type="binding site" evidence="1">
    <location>
        <position position="1084"/>
    </location>
    <ligand>
        <name>Mg(2+)</name>
        <dbReference type="ChEBI" id="CHEBI:18420"/>
        <label>2</label>
        <note>catalytic; for RNase H activity</note>
    </ligand>
</feature>
<feature type="binding site" evidence="1">
    <location>
        <position position="1135"/>
    </location>
    <ligand>
        <name>Mg(2+)</name>
        <dbReference type="ChEBI" id="CHEBI:18420"/>
        <label>2</label>
        <note>catalytic; for RNase H activity</note>
    </ligand>
</feature>
<feature type="binding site" evidence="13">
    <location>
        <position position="1158"/>
    </location>
    <ligand>
        <name>Zn(2+)</name>
        <dbReference type="ChEBI" id="CHEBI:29105"/>
    </ligand>
</feature>
<feature type="binding site" evidence="13">
    <location>
        <position position="1162"/>
    </location>
    <ligand>
        <name>Zn(2+)</name>
        <dbReference type="ChEBI" id="CHEBI:29105"/>
    </ligand>
</feature>
<feature type="binding site" evidence="13">
    <location>
        <position position="1186"/>
    </location>
    <ligand>
        <name>Zn(2+)</name>
        <dbReference type="ChEBI" id="CHEBI:29105"/>
    </ligand>
</feature>
<feature type="binding site" evidence="13">
    <location>
        <position position="1189"/>
    </location>
    <ligand>
        <name>Zn(2+)</name>
        <dbReference type="ChEBI" id="CHEBI:29105"/>
    </ligand>
</feature>
<feature type="binding site" evidence="1">
    <location>
        <position position="1210"/>
    </location>
    <ligand>
        <name>Mg(2+)</name>
        <dbReference type="ChEBI" id="CHEBI:18420"/>
        <label>3</label>
        <note>catalytic; for integrase activity</note>
    </ligand>
</feature>
<feature type="binding site" evidence="1">
    <location>
        <position position="1262"/>
    </location>
    <ligand>
        <name>Mg(2+)</name>
        <dbReference type="ChEBI" id="CHEBI:18420"/>
        <label>3</label>
        <note>catalytic; for integrase activity</note>
    </ligand>
</feature>
<feature type="site" description="Cleavage; by viral protease" evidence="1">
    <location>
        <begin position="130"/>
        <end position="131"/>
    </location>
</feature>
<feature type="site" description="Cis/trans isomerization of proline peptide bond; by human PPIA/CYPA" evidence="1">
    <location>
        <begin position="219"/>
        <end position="220"/>
    </location>
</feature>
<feature type="site" description="Cleavage; by viral protease" evidence="1">
    <location>
        <begin position="361"/>
        <end position="362"/>
    </location>
</feature>
<feature type="site" description="Cleavage; by viral protease" evidence="1">
    <location>
        <begin position="428"/>
        <end position="429"/>
    </location>
</feature>
<feature type="site" description="Cleavage; by viral protease" evidence="1">
    <location>
        <begin position="487"/>
        <end position="488"/>
    </location>
</feature>
<feature type="site" description="Cleavage; by viral protease" evidence="1">
    <location>
        <begin position="586"/>
        <end position="587"/>
    </location>
</feature>
<feature type="site" description="Essential for RT p66/p51 heterodimerization" evidence="1">
    <location>
        <position position="987"/>
    </location>
</feature>
<feature type="site" description="Essential for RT p66/p51 heterodimerization" evidence="1">
    <location>
        <position position="1000"/>
    </location>
</feature>
<feature type="site" description="Cleavage; by viral protease; partial" evidence="1">
    <location>
        <begin position="1026"/>
        <end position="1027"/>
    </location>
</feature>
<feature type="site" description="Cleavage; by viral protease" evidence="1">
    <location>
        <begin position="1146"/>
        <end position="1147"/>
    </location>
</feature>
<feature type="lipid moiety-binding region" description="N-myristoyl glycine; by host" evidence="1">
    <location>
        <position position="2"/>
    </location>
</feature>
<dbReference type="EC" id="3.4.23.16"/>
<dbReference type="EC" id="2.7.7.49"/>
<dbReference type="EC" id="2.7.7.7"/>
<dbReference type="EC" id="3.1.26.13"/>
<dbReference type="EC" id="3.1.13.2"/>
<dbReference type="EC" id="2.7.7.-" evidence="4"/>
<dbReference type="EC" id="3.1.-.-" evidence="4"/>
<dbReference type="EMBL" id="DQ373063">
    <property type="protein sequence ID" value="ABD19475.1"/>
    <property type="status" value="ALT_SEQ"/>
    <property type="molecule type" value="Genomic_RNA"/>
</dbReference>
<dbReference type="SMR" id="Q1A267"/>
<dbReference type="PRO" id="PR:Q1A267"/>
<dbReference type="Proteomes" id="UP000009152">
    <property type="component" value="Segment"/>
</dbReference>
<dbReference type="GO" id="GO:0043657">
    <property type="term" value="C:host cell"/>
    <property type="evidence" value="ECO:0007669"/>
    <property type="project" value="GOC"/>
</dbReference>
<dbReference type="GO" id="GO:0030430">
    <property type="term" value="C:host cell cytoplasm"/>
    <property type="evidence" value="ECO:0007669"/>
    <property type="project" value="UniProtKB-SubCell"/>
</dbReference>
<dbReference type="GO" id="GO:0042025">
    <property type="term" value="C:host cell nucleus"/>
    <property type="evidence" value="ECO:0007669"/>
    <property type="project" value="UniProtKB-SubCell"/>
</dbReference>
<dbReference type="GO" id="GO:0020002">
    <property type="term" value="C:host cell plasma membrane"/>
    <property type="evidence" value="ECO:0007669"/>
    <property type="project" value="UniProtKB-SubCell"/>
</dbReference>
<dbReference type="GO" id="GO:0016020">
    <property type="term" value="C:membrane"/>
    <property type="evidence" value="ECO:0007669"/>
    <property type="project" value="UniProtKB-KW"/>
</dbReference>
<dbReference type="GO" id="GO:0019013">
    <property type="term" value="C:viral nucleocapsid"/>
    <property type="evidence" value="ECO:0007669"/>
    <property type="project" value="UniProtKB-KW"/>
</dbReference>
<dbReference type="GO" id="GO:0004190">
    <property type="term" value="F:aspartic-type endopeptidase activity"/>
    <property type="evidence" value="ECO:0007669"/>
    <property type="project" value="UniProtKB-KW"/>
</dbReference>
<dbReference type="GO" id="GO:0003677">
    <property type="term" value="F:DNA binding"/>
    <property type="evidence" value="ECO:0007669"/>
    <property type="project" value="UniProtKB-KW"/>
</dbReference>
<dbReference type="GO" id="GO:0003887">
    <property type="term" value="F:DNA-directed DNA polymerase activity"/>
    <property type="evidence" value="ECO:0007669"/>
    <property type="project" value="UniProtKB-KW"/>
</dbReference>
<dbReference type="GO" id="GO:0004533">
    <property type="term" value="F:exoribonuclease H activity"/>
    <property type="evidence" value="ECO:0007669"/>
    <property type="project" value="UniProtKB-EC"/>
</dbReference>
<dbReference type="GO" id="GO:0035613">
    <property type="term" value="F:RNA stem-loop binding"/>
    <property type="evidence" value="ECO:0007669"/>
    <property type="project" value="TreeGrafter"/>
</dbReference>
<dbReference type="GO" id="GO:0003964">
    <property type="term" value="F:RNA-directed DNA polymerase activity"/>
    <property type="evidence" value="ECO:0007669"/>
    <property type="project" value="UniProtKB-KW"/>
</dbReference>
<dbReference type="GO" id="GO:0004523">
    <property type="term" value="F:RNA-DNA hybrid ribonuclease activity"/>
    <property type="evidence" value="ECO:0007669"/>
    <property type="project" value="InterPro"/>
</dbReference>
<dbReference type="GO" id="GO:0005198">
    <property type="term" value="F:structural molecule activity"/>
    <property type="evidence" value="ECO:0007669"/>
    <property type="project" value="InterPro"/>
</dbReference>
<dbReference type="GO" id="GO:0008270">
    <property type="term" value="F:zinc ion binding"/>
    <property type="evidence" value="ECO:0007669"/>
    <property type="project" value="UniProtKB-KW"/>
</dbReference>
<dbReference type="GO" id="GO:0015074">
    <property type="term" value="P:DNA integration"/>
    <property type="evidence" value="ECO:0007669"/>
    <property type="project" value="UniProtKB-KW"/>
</dbReference>
<dbReference type="GO" id="GO:0006310">
    <property type="term" value="P:DNA recombination"/>
    <property type="evidence" value="ECO:0007669"/>
    <property type="project" value="UniProtKB-KW"/>
</dbReference>
<dbReference type="GO" id="GO:0075713">
    <property type="term" value="P:establishment of integrated proviral latency"/>
    <property type="evidence" value="ECO:0007669"/>
    <property type="project" value="UniProtKB-KW"/>
</dbReference>
<dbReference type="GO" id="GO:0006508">
    <property type="term" value="P:proteolysis"/>
    <property type="evidence" value="ECO:0007669"/>
    <property type="project" value="UniProtKB-KW"/>
</dbReference>
<dbReference type="GO" id="GO:0046718">
    <property type="term" value="P:symbiont entry into host cell"/>
    <property type="evidence" value="ECO:0007669"/>
    <property type="project" value="UniProtKB-KW"/>
</dbReference>
<dbReference type="GO" id="GO:0039657">
    <property type="term" value="P:symbiont-mediated suppression of host gene expression"/>
    <property type="evidence" value="ECO:0007669"/>
    <property type="project" value="UniProtKB-KW"/>
</dbReference>
<dbReference type="GO" id="GO:0044826">
    <property type="term" value="P:viral genome integration into host DNA"/>
    <property type="evidence" value="ECO:0007669"/>
    <property type="project" value="UniProtKB-KW"/>
</dbReference>
<dbReference type="GO" id="GO:0075732">
    <property type="term" value="P:viral penetration into host nucleus"/>
    <property type="evidence" value="ECO:0007669"/>
    <property type="project" value="UniProtKB-KW"/>
</dbReference>
<dbReference type="GO" id="GO:0075523">
    <property type="term" value="P:viral translational frameshifting"/>
    <property type="evidence" value="ECO:0007669"/>
    <property type="project" value="UniProtKB-KW"/>
</dbReference>
<dbReference type="CDD" id="cd05482">
    <property type="entry name" value="HIV_retropepsin_like"/>
    <property type="match status" value="1"/>
</dbReference>
<dbReference type="CDD" id="cd01645">
    <property type="entry name" value="RT_Rtv"/>
    <property type="match status" value="1"/>
</dbReference>
<dbReference type="FunFam" id="1.10.375.10:FF:000001">
    <property type="entry name" value="Gag polyprotein"/>
    <property type="match status" value="1"/>
</dbReference>
<dbReference type="FunFam" id="3.30.70.270:FF:000006">
    <property type="entry name" value="Gag-Pol polyprotein"/>
    <property type="match status" value="1"/>
</dbReference>
<dbReference type="FunFam" id="3.30.420.10:FF:000017">
    <property type="entry name" value="POL polyprotein"/>
    <property type="match status" value="1"/>
</dbReference>
<dbReference type="Gene3D" id="1.10.10.200">
    <property type="match status" value="1"/>
</dbReference>
<dbReference type="Gene3D" id="1.10.1200.30">
    <property type="match status" value="1"/>
</dbReference>
<dbReference type="Gene3D" id="3.30.70.270">
    <property type="match status" value="3"/>
</dbReference>
<dbReference type="Gene3D" id="2.40.70.10">
    <property type="entry name" value="Acid Proteases"/>
    <property type="match status" value="1"/>
</dbReference>
<dbReference type="Gene3D" id="3.10.10.10">
    <property type="entry name" value="HIV Type 1 Reverse Transcriptase, subunit A, domain 1"/>
    <property type="match status" value="1"/>
</dbReference>
<dbReference type="Gene3D" id="1.10.375.10">
    <property type="entry name" value="Human Immunodeficiency Virus Type 1 Capsid Protein"/>
    <property type="match status" value="1"/>
</dbReference>
<dbReference type="Gene3D" id="1.10.150.90">
    <property type="entry name" value="Immunodeficiency lentiviruses, gag gene matrix protein p17"/>
    <property type="match status" value="1"/>
</dbReference>
<dbReference type="Gene3D" id="2.30.30.10">
    <property type="entry name" value="Integrase, C-terminal domain superfamily, retroviral"/>
    <property type="match status" value="1"/>
</dbReference>
<dbReference type="Gene3D" id="3.30.420.10">
    <property type="entry name" value="Ribonuclease H-like superfamily/Ribonuclease H"/>
    <property type="match status" value="2"/>
</dbReference>
<dbReference type="Gene3D" id="1.20.5.760">
    <property type="entry name" value="Single helix bin"/>
    <property type="match status" value="1"/>
</dbReference>
<dbReference type="Gene3D" id="4.10.60.10">
    <property type="entry name" value="Zinc finger, CCHC-type"/>
    <property type="match status" value="1"/>
</dbReference>
<dbReference type="InterPro" id="IPR001969">
    <property type="entry name" value="Aspartic_peptidase_AS"/>
</dbReference>
<dbReference type="InterPro" id="IPR043502">
    <property type="entry name" value="DNA/RNA_pol_sf"/>
</dbReference>
<dbReference type="InterPro" id="IPR045345">
    <property type="entry name" value="Gag_p24_C"/>
</dbReference>
<dbReference type="InterPro" id="IPR017856">
    <property type="entry name" value="Integrase-like_N"/>
</dbReference>
<dbReference type="InterPro" id="IPR036862">
    <property type="entry name" value="Integrase_C_dom_sf_retrovir"/>
</dbReference>
<dbReference type="InterPro" id="IPR001037">
    <property type="entry name" value="Integrase_C_retrovir"/>
</dbReference>
<dbReference type="InterPro" id="IPR001584">
    <property type="entry name" value="Integrase_cat-core"/>
</dbReference>
<dbReference type="InterPro" id="IPR003308">
    <property type="entry name" value="Integrase_Zn-bd_dom_N"/>
</dbReference>
<dbReference type="InterPro" id="IPR000071">
    <property type="entry name" value="Lentvrl_matrix_N"/>
</dbReference>
<dbReference type="InterPro" id="IPR012344">
    <property type="entry name" value="Matrix_HIV/RSV_N"/>
</dbReference>
<dbReference type="InterPro" id="IPR001995">
    <property type="entry name" value="Peptidase_A2_cat"/>
</dbReference>
<dbReference type="InterPro" id="IPR021109">
    <property type="entry name" value="Peptidase_aspartic_dom_sf"/>
</dbReference>
<dbReference type="InterPro" id="IPR034170">
    <property type="entry name" value="Retropepsin-like_cat_dom"/>
</dbReference>
<dbReference type="InterPro" id="IPR018061">
    <property type="entry name" value="Retropepsins"/>
</dbReference>
<dbReference type="InterPro" id="IPR008916">
    <property type="entry name" value="Retrov_capsid_C"/>
</dbReference>
<dbReference type="InterPro" id="IPR008919">
    <property type="entry name" value="Retrov_capsid_N"/>
</dbReference>
<dbReference type="InterPro" id="IPR010999">
    <property type="entry name" value="Retrovr_matrix"/>
</dbReference>
<dbReference type="InterPro" id="IPR043128">
    <property type="entry name" value="Rev_trsase/Diguanyl_cyclase"/>
</dbReference>
<dbReference type="InterPro" id="IPR012337">
    <property type="entry name" value="RNaseH-like_sf"/>
</dbReference>
<dbReference type="InterPro" id="IPR002156">
    <property type="entry name" value="RNaseH_domain"/>
</dbReference>
<dbReference type="InterPro" id="IPR036397">
    <property type="entry name" value="RNaseH_sf"/>
</dbReference>
<dbReference type="InterPro" id="IPR000477">
    <property type="entry name" value="RT_dom"/>
</dbReference>
<dbReference type="InterPro" id="IPR010659">
    <property type="entry name" value="RVT_connect"/>
</dbReference>
<dbReference type="InterPro" id="IPR010661">
    <property type="entry name" value="RVT_thumb"/>
</dbReference>
<dbReference type="InterPro" id="IPR001878">
    <property type="entry name" value="Znf_CCHC"/>
</dbReference>
<dbReference type="InterPro" id="IPR036875">
    <property type="entry name" value="Znf_CCHC_sf"/>
</dbReference>
<dbReference type="PANTHER" id="PTHR41694">
    <property type="entry name" value="ENDOGENOUS RETROVIRUS GROUP K MEMBER POL PROTEIN"/>
    <property type="match status" value="1"/>
</dbReference>
<dbReference type="PANTHER" id="PTHR41694:SF3">
    <property type="entry name" value="RNA-DIRECTED DNA POLYMERASE-RELATED"/>
    <property type="match status" value="1"/>
</dbReference>
<dbReference type="Pfam" id="PF00540">
    <property type="entry name" value="Gag_p17"/>
    <property type="match status" value="1"/>
</dbReference>
<dbReference type="Pfam" id="PF00607">
    <property type="entry name" value="Gag_p24"/>
    <property type="match status" value="1"/>
</dbReference>
<dbReference type="Pfam" id="PF19317">
    <property type="entry name" value="Gag_p24_C"/>
    <property type="match status" value="1"/>
</dbReference>
<dbReference type="Pfam" id="PF00552">
    <property type="entry name" value="IN_DBD_C"/>
    <property type="match status" value="1"/>
</dbReference>
<dbReference type="Pfam" id="PF02022">
    <property type="entry name" value="Integrase_Zn"/>
    <property type="match status" value="1"/>
</dbReference>
<dbReference type="Pfam" id="PF00075">
    <property type="entry name" value="RNase_H"/>
    <property type="match status" value="1"/>
</dbReference>
<dbReference type="Pfam" id="PF00665">
    <property type="entry name" value="rve"/>
    <property type="match status" value="1"/>
</dbReference>
<dbReference type="Pfam" id="PF00077">
    <property type="entry name" value="RVP"/>
    <property type="match status" value="1"/>
</dbReference>
<dbReference type="Pfam" id="PF00078">
    <property type="entry name" value="RVT_1"/>
    <property type="match status" value="1"/>
</dbReference>
<dbReference type="Pfam" id="PF06815">
    <property type="entry name" value="RVT_connect"/>
    <property type="match status" value="1"/>
</dbReference>
<dbReference type="Pfam" id="PF06817">
    <property type="entry name" value="RVT_thumb"/>
    <property type="match status" value="1"/>
</dbReference>
<dbReference type="Pfam" id="PF00098">
    <property type="entry name" value="zf-CCHC"/>
    <property type="match status" value="2"/>
</dbReference>
<dbReference type="PRINTS" id="PR00234">
    <property type="entry name" value="HIV1MATRIX"/>
</dbReference>
<dbReference type="SMART" id="SM00343">
    <property type="entry name" value="ZnF_C2HC"/>
    <property type="match status" value="2"/>
</dbReference>
<dbReference type="SUPFAM" id="SSF50630">
    <property type="entry name" value="Acid proteases"/>
    <property type="match status" value="1"/>
</dbReference>
<dbReference type="SUPFAM" id="SSF50122">
    <property type="entry name" value="DNA-binding domain of retroviral integrase"/>
    <property type="match status" value="1"/>
</dbReference>
<dbReference type="SUPFAM" id="SSF56672">
    <property type="entry name" value="DNA/RNA polymerases"/>
    <property type="match status" value="1"/>
</dbReference>
<dbReference type="SUPFAM" id="SSF46919">
    <property type="entry name" value="N-terminal Zn binding domain of HIV integrase"/>
    <property type="match status" value="1"/>
</dbReference>
<dbReference type="SUPFAM" id="SSF47836">
    <property type="entry name" value="Retroviral matrix proteins"/>
    <property type="match status" value="1"/>
</dbReference>
<dbReference type="SUPFAM" id="SSF47353">
    <property type="entry name" value="Retrovirus capsid dimerization domain-like"/>
    <property type="match status" value="1"/>
</dbReference>
<dbReference type="SUPFAM" id="SSF47943">
    <property type="entry name" value="Retrovirus capsid protein, N-terminal core domain"/>
    <property type="match status" value="1"/>
</dbReference>
<dbReference type="SUPFAM" id="SSF57756">
    <property type="entry name" value="Retrovirus zinc finger-like domains"/>
    <property type="match status" value="1"/>
</dbReference>
<dbReference type="SUPFAM" id="SSF53098">
    <property type="entry name" value="Ribonuclease H-like"/>
    <property type="match status" value="2"/>
</dbReference>
<dbReference type="PROSITE" id="PS50175">
    <property type="entry name" value="ASP_PROT_RETROV"/>
    <property type="match status" value="1"/>
</dbReference>
<dbReference type="PROSITE" id="PS00141">
    <property type="entry name" value="ASP_PROTEASE"/>
    <property type="match status" value="1"/>
</dbReference>
<dbReference type="PROSITE" id="PS50994">
    <property type="entry name" value="INTEGRASE"/>
    <property type="match status" value="1"/>
</dbReference>
<dbReference type="PROSITE" id="PS51027">
    <property type="entry name" value="INTEGRASE_DBD"/>
    <property type="match status" value="1"/>
</dbReference>
<dbReference type="PROSITE" id="PS50879">
    <property type="entry name" value="RNASE_H_1"/>
    <property type="match status" value="1"/>
</dbReference>
<dbReference type="PROSITE" id="PS50878">
    <property type="entry name" value="RT_POL"/>
    <property type="match status" value="1"/>
</dbReference>
<dbReference type="PROSITE" id="PS50158">
    <property type="entry name" value="ZF_CCHC"/>
    <property type="match status" value="2"/>
</dbReference>
<dbReference type="PROSITE" id="PS50876">
    <property type="entry name" value="ZF_INTEGRASE"/>
    <property type="match status" value="1"/>
</dbReference>
<accession>Q1A267</accession>
<name>POL_SIVMB</name>
<evidence type="ECO:0000250" key="1"/>
<evidence type="ECO:0000250" key="2">
    <source>
        <dbReference type="UniProtKB" id="P03366"/>
    </source>
</evidence>
<evidence type="ECO:0000250" key="3">
    <source>
        <dbReference type="UniProtKB" id="P03367"/>
    </source>
</evidence>
<evidence type="ECO:0000250" key="4">
    <source>
        <dbReference type="UniProtKB" id="P04585"/>
    </source>
</evidence>
<evidence type="ECO:0000250" key="5">
    <source>
        <dbReference type="UniProtKB" id="P04591"/>
    </source>
</evidence>
<evidence type="ECO:0000250" key="6">
    <source>
        <dbReference type="UniProtKB" id="P12493"/>
    </source>
</evidence>
<evidence type="ECO:0000250" key="7">
    <source>
        <dbReference type="UniProtKB" id="P12497"/>
    </source>
</evidence>
<evidence type="ECO:0000255" key="8"/>
<evidence type="ECO:0000255" key="9">
    <source>
        <dbReference type="PROSITE-ProRule" id="PRU00047"/>
    </source>
</evidence>
<evidence type="ECO:0000255" key="10">
    <source>
        <dbReference type="PROSITE-ProRule" id="PRU00275"/>
    </source>
</evidence>
<evidence type="ECO:0000255" key="11">
    <source>
        <dbReference type="PROSITE-ProRule" id="PRU00405"/>
    </source>
</evidence>
<evidence type="ECO:0000255" key="12">
    <source>
        <dbReference type="PROSITE-ProRule" id="PRU00408"/>
    </source>
</evidence>
<evidence type="ECO:0000255" key="13">
    <source>
        <dbReference type="PROSITE-ProRule" id="PRU00450"/>
    </source>
</evidence>
<evidence type="ECO:0000255" key="14">
    <source>
        <dbReference type="PROSITE-ProRule" id="PRU00457"/>
    </source>
</evidence>
<evidence type="ECO:0000255" key="15">
    <source>
        <dbReference type="PROSITE-ProRule" id="PRU00506"/>
    </source>
</evidence>
<evidence type="ECO:0000255" key="16">
    <source>
        <dbReference type="PROSITE-ProRule" id="PRU10094"/>
    </source>
</evidence>
<evidence type="ECO:0000256" key="17">
    <source>
        <dbReference type="SAM" id="MobiDB-lite"/>
    </source>
</evidence>
<evidence type="ECO:0000305" key="18"/>
<comment type="function">
    <text evidence="1">Gag-Pol polyprotein and Gag polyprotein may regulate their own translation, by the binding genomic RNA in the 5'-UTR. At low concentration, Gag-Pol and Gag would promote translation, whereas at high concentration, the polyproteins encapsidate genomic RNA and then shut off translation (By similarity).</text>
</comment>
<comment type="function">
    <text evidence="1">Matrix protein p17 has two main functions: in infected cell, it targets Gag and Gag-pol polyproteins to the plasma membrane via a multipartite membrane-binding signal, that includes its myristointegration complex. The myristoylation signal and the NLS exert conflicting influences its subcellular localization. The key regulation of these motifs might be phosphorylation of a portion of MA molecules on the C-terminal tyrosine at the time of virus maturation, by virion-associated cellular tyrosine kinase. Implicated in the release from host cell mediated by Vpu (By similarity).</text>
</comment>
<comment type="function">
    <text evidence="1">Capsid protein p24 forms the conical core that encapsulates the genomic RNA-nucleocapsid complex in the virion. The core is constituted by capsid protein hexamer subunits. The core is disassembled soon after virion entry. Interaction with host PPIA/CYPA protects the virus from restriction by host TRIM5-alpha and from an unknown antiviral activity in host cells. This capsid restriction by TRIM5 is one of the factors which restricts SIV to the simian species (By similarity).</text>
</comment>
<comment type="function">
    <text evidence="1">Nucleocapsid protein p7 encapsulates and protects viral dimeric unspliced (genomic) RNA. Binds these RNAs through its zinc fingers. Facilitates rearangement of nucleic acid secondary structure during retrotranscription of genomic RNA. This capability is referred to as nucleic acid chaperone activity (By similarity).</text>
</comment>
<comment type="function">
    <text evidence="10">The aspartyl protease mediates proteolytic cleavages of Gag and Gag-Pol polyproteins during or shortly after the release of the virion from the plasma membrane. Cleavages take place as an ordered, step-wise cascade to yield mature proteins. This process is called maturation. Displays maximal activity during the budding process just prior to particle release from the cell. Also cleaves Nef and Vif, probably concomitantly with viral structural proteins on maturation of virus particles. Hydrolyzes host EIF4GI and PABP1 in order to shut off the capped cellular mRNA translation. The resulting inhibition of cellular protein synthesis serves to ensure maximal viral gene expression and to evade host immune response (By similarity).</text>
</comment>
<comment type="function">
    <text evidence="1">Reverse transcriptase/ribonuclease H (RT) is a multifunctional enzyme that converts the viral dimeric RNA genome into dsDNA in the cytoplasm, shortly after virus entry into the cell. This enzyme displays a DNA polymerase activity that can copy either DNA or RNA templates, and a ribonuclease H (RNase H) activity that cleaves the RNA strand of RNA-DNA heteroduplexes in a partially processive 3' to 5' endonucleasic mode. Conversion of viral genomic RNA into dsDNA requires many steps. A tRNA binds to the primer-binding site (PBS) situated at the 5'-end of the viral RNA. RT uses the 3' end of the tRNA primer to perform a short round of RNA-dependent minus-strand DNA synthesis. The reading proceeds through the U5 region and ends after the repeated (R) region which is present at both ends of viral RNA. The portion of the RNA-DNA heteroduplex is digested by the RNase H, resulting in a ssDNA product attached to the tRNA primer. This ssDNA/tRNA hybridizes with the identical R region situated at the 3' end of viral RNA. This template exchange, known as minus-strand DNA strong stop transfer, can be either intra- or intermolecular. RT uses the 3' end of this newly synthesized short ssDNA to perform the RNA-dependent minus-strand DNA synthesis of the whole template. RNase H digests the RNA template except for two polypurine tracts (PPTs) situated at the 5'-end and near the center of the genome. It is not clear if both polymerase and RNase H activities are simultaneous. RNase H can probably proceed both in a polymerase-dependent (RNA cut into small fragments by the same RT performing DNA synthesis) and a polymerase-independent mode (cleavage of remaining RNA fragments by free RTs). Secondly, RT performs DNA-directed plus-strand DNA synthesis using the PPTs that have not been removed by RNase H as primers. PPTs and tRNA primers are then removed by RNase H. The 3' and 5' ssDNA PBS regions hybridize to form a circular dsDNA intermediate. Strand displacement synthesis by RT to the PBS and PPT ends produces a blunt ended, linear dsDNA copy of the viral genome that includes long terminal repeats (LTRs) at both ends (By similarity).</text>
</comment>
<comment type="function">
    <text evidence="1">Integrase catalyzes viral DNA integration into the host chromosome, by performing a series of DNA cutting and joining reactions. This enzyme activity takes place after virion entry into a cell and reverse transcription of the RNA genome in dsDNA. The first step in the integration process is 3' processing. This step requires a complex comprising the viral genome, matrix protein, Vpr and integrase. This complex is called the pre-integration complex (PIC). The integrase protein removes 2 nucleotides from each 3' end of the viral DNA, leaving recessed CA OH's at the 3' ends. In the second step, the PIC enters cell nucleus. This process is mediated through integrase and Vpr proteins, and allows the virus to infect a non dividing cell. This ability to enter the nucleus is specific of lentiviruses, other retroviruses cannot and rely on cell division to access cell chromosomes. In the third step, termed strand transfer, the integrase protein joins the previously processed 3' ends to the 5' ends of strands of target cellular DNA at the site of integration. The 5'-ends are produced by integrase-catalyzed staggered cuts, 5 bp apart. A Y-shaped, gapped, recombination intermediate results, with the 5'-ends of the viral DNA strands and the 3' ends of target DNA strands remaining unjoined, flanking a gap of 5 bp. The last step is viral DNA integration into host chromosome. This involves host DNA repair synthesis in which the 5 bp gaps between the unjoined strands are filled in and then ligated. Since this process occurs at both cuts flanking the SIV genome, a 5 bp duplication of host DNA is produced at the ends of SIV integration. Alternatively, Integrase may catalyze the excision of viral DNA just after strand transfer, this is termed disintegration (By similarity).</text>
</comment>
<comment type="catalytic activity">
    <reaction evidence="10">
        <text>Specific for a P1 residue that is hydrophobic, and P1' variable, but often Pro.</text>
        <dbReference type="EC" id="3.4.23.16"/>
    </reaction>
</comment>
<comment type="catalytic activity">
    <reaction>
        <text>Endohydrolysis of RNA in RNA/DNA hybrids. Three different cleavage modes: 1. sequence-specific internal cleavage of RNA. Human immunodeficiency virus type 1 and Moloney murine leukemia virus enzymes prefer to cleave the RNA strand one nucleotide away from the RNA-DNA junction. 2. RNA 5'-end directed cleavage 13-19 nucleotides from the RNA end. 3. DNA 3'-end directed cleavage 15-20 nucleotides away from the primer terminus.</text>
        <dbReference type="EC" id="3.1.26.13"/>
    </reaction>
</comment>
<comment type="catalytic activity">
    <reaction>
        <text>3'-end directed exonucleolytic cleavage of viral RNA-DNA hybrid.</text>
        <dbReference type="EC" id="3.1.13.2"/>
    </reaction>
</comment>
<comment type="catalytic activity">
    <reaction evidence="11">
        <text>DNA(n) + a 2'-deoxyribonucleoside 5'-triphosphate = DNA(n+1) + diphosphate</text>
        <dbReference type="Rhea" id="RHEA:22508"/>
        <dbReference type="Rhea" id="RHEA-COMP:17339"/>
        <dbReference type="Rhea" id="RHEA-COMP:17340"/>
        <dbReference type="ChEBI" id="CHEBI:33019"/>
        <dbReference type="ChEBI" id="CHEBI:61560"/>
        <dbReference type="ChEBI" id="CHEBI:173112"/>
        <dbReference type="EC" id="2.7.7.49"/>
    </reaction>
</comment>
<comment type="catalytic activity">
    <reaction evidence="11">
        <text>DNA(n) + a 2'-deoxyribonucleoside 5'-triphosphate = DNA(n+1) + diphosphate</text>
        <dbReference type="Rhea" id="RHEA:22508"/>
        <dbReference type="Rhea" id="RHEA-COMP:17339"/>
        <dbReference type="Rhea" id="RHEA-COMP:17340"/>
        <dbReference type="ChEBI" id="CHEBI:33019"/>
        <dbReference type="ChEBI" id="CHEBI:61560"/>
        <dbReference type="ChEBI" id="CHEBI:173112"/>
        <dbReference type="EC" id="2.7.7.7"/>
    </reaction>
</comment>
<comment type="cofactor">
    <cofactor evidence="1">
        <name>Mg(2+)</name>
        <dbReference type="ChEBI" id="CHEBI:18420"/>
    </cofactor>
    <text evidence="1">Binds 2 magnesium ions for reverse transcriptase polymerase activity.</text>
</comment>
<comment type="cofactor">
    <cofactor evidence="1">
        <name>Mg(2+)</name>
        <dbReference type="ChEBI" id="CHEBI:18420"/>
    </cofactor>
    <text evidence="1">Binds 2 magnesium ions for ribonuclease H (RNase H) activity. Substrate-binding is a precondition for magnesium binding.</text>
</comment>
<comment type="cofactor">
    <cofactor evidence="1">
        <name>Mg(2+)</name>
        <dbReference type="ChEBI" id="CHEBI:18420"/>
    </cofactor>
    <text evidence="1">Magnesium ions are required for integrase activity. Binds at least 1, maybe 2 magnesium ions.</text>
</comment>
<comment type="activity regulation">
    <text>The viral protease is inhibited by many synthetic protease inhibitors (PIs), such as amprenavir, atazanavir, indinavir, loprinavir, nelfinavir, ritonavir and saquinavir. RT can be inhibited either by nucleoside RT inhibitors (NRTIs) or by non nucleoside RT inhibitors (NNRTIs). NRTIs act as chain terminators, whereas NNRTIs inhibit DNA polymerization by binding a small hydrophobic pocket near the RT active site and inducing an allosteric change in this region. Classical NRTIs are abacavir, adefovir (PMEA), didanosine (ddI), lamivudine (3TC), stavudine (d4T), tenofovir (PMPA), zalcitabine (ddC), and zidovudine (AZT). Classical NNRTIs are atevirdine (BHAP U-87201E), delavirdine, efavirenz (DMP-266), emivirine (I-EBU), and nevirapine (BI-RG-587). The tritherapies used as a basic effective treatment of AIDS associate two NRTIs and one NNRTI. Use of protease inhibitors in tritherapy regimens permit more ambitious therapeutic strategies.</text>
</comment>
<comment type="subunit">
    <molecule>Matrix protein p17</molecule>
    <text evidence="5 6">Homotrimer. Interacts with gp41 (via C-terminus).</text>
</comment>
<comment type="subunit">
    <molecule>Protease</molecule>
    <text evidence="4 7">Homodimer. The active site consists of two apposed aspartic acid residues.</text>
</comment>
<comment type="subunit">
    <molecule>Reverse transcriptase/ribonuclease H</molecule>
    <text evidence="2">Heterodimer of p66 RT and p51 RT (RT p66/p51). Heterodimerization of RT is essential for DNA polymerase activity. Despite the sequence identities, p66 RT and p51 RT have distinct folding.</text>
</comment>
<comment type="subunit">
    <molecule>Integrase</molecule>
    <text evidence="3">Homotetramer; may further associate as a homohexadecamer (By similarity).</text>
</comment>
<comment type="subcellular location">
    <molecule>Matrix protein p17</molecule>
    <subcellularLocation>
        <location evidence="18">Virion</location>
    </subcellularLocation>
    <subcellularLocation>
        <location evidence="1">Host nucleus</location>
    </subcellularLocation>
    <subcellularLocation>
        <location evidence="1">Host cytoplasm</location>
    </subcellularLocation>
    <subcellularLocation>
        <location evidence="18">Host cell membrane</location>
        <topology evidence="18">Lipid-anchor</topology>
    </subcellularLocation>
    <text evidence="1">Following virus entry, the nuclear localization signal (NLS) of the matrix protein participates with Vpr to the nuclear localization of the viral genome. During virus production, the nuclear export activity of the matrix protein counteracts the NLS to maintain the Gag and Gag-Pol polyproteins in the cytoplasm, thereby directing unspliced RNA to the plasma membrane (By similarity).</text>
</comment>
<comment type="subcellular location">
    <molecule>Capsid protein p24</molecule>
    <subcellularLocation>
        <location evidence="18">Virion</location>
    </subcellularLocation>
</comment>
<comment type="subcellular location">
    <molecule>Nucleocapsid protein p7</molecule>
    <subcellularLocation>
        <location evidence="18">Virion</location>
    </subcellularLocation>
</comment>
<comment type="subcellular location">
    <molecule>Reverse transcriptase/ribonuclease H</molecule>
    <subcellularLocation>
        <location evidence="18">Virion</location>
    </subcellularLocation>
</comment>
<comment type="subcellular location">
    <molecule>Integrase</molecule>
    <subcellularLocation>
        <location evidence="18">Virion</location>
    </subcellularLocation>
    <subcellularLocation>
        <location evidence="18">Host nucleus</location>
    </subcellularLocation>
    <subcellularLocation>
        <location evidence="18">Host cytoplasm</location>
    </subcellularLocation>
    <text evidence="18">Nuclear at initial phase, cytoplasmic at assembly.</text>
</comment>
<comment type="alternative products">
    <event type="ribosomal frameshifting"/>
    <isoform>
        <id>Q1A267-1</id>
        <name>Gag-Pol polyprotein</name>
        <sequence type="displayed"/>
    </isoform>
    <isoform>
        <id>Q1A268-1</id>
        <name>Gag polyprotein</name>
        <sequence type="external"/>
    </isoform>
    <text>Translation results in the formation of the Gag polyprotein most of the time. Ribosomal frameshifting at the gag-pol genes boundary occurs at low frequency and produces the Gag-Pol polyprotein. This strategy of translation probably allows the virus to modulate the quantity of each viral protein. Maintenance of a correct Gag to Gag-Pol ratio is essential for RNA dimerization and viral infectivity.</text>
</comment>
<comment type="domain">
    <text evidence="1">The p66 RT is structured in five subdomains: finger, palm, thumb, connection and RNase H. Within the palm subdomain, the 'primer grip' region is thought to be involved in the positioning of the primer terminus for accommodating the incoming nucleotide. The RNase H domain stabilizes the association of RT with primer-template (By similarity).</text>
</comment>
<comment type="domain">
    <text evidence="1">The tryptophan repeat motif is involved in RT p66/p51 dimerization.</text>
</comment>
<comment type="PTM">
    <text evidence="11">Specific enzymatic cleavages by the viral protease yield mature proteins. The protease is released by autocatalytic cleavage. The polyprotein is cleaved during and after budding, this process is termed maturation. Proteolytic cleavage of p66 RT removes the RNase H domain to yield the p51 RT subunit.</text>
</comment>
<comment type="PTM">
    <text>Capsid protein p24 is phosphorylated.</text>
</comment>
<comment type="miscellaneous">
    <text>The reverse transcriptase is an error-prone enzyme that lacks a proof-reading function. High mutations rate is a direct consequence of this characteristic. RT also displays frequent template switching leading to high recombination rate. Recombination mostly occurs between homologous regions of the two copackaged RNA genomes. If these two RNA molecules derive from different viral strains, reverse transcription will give rise to highly recombinated proviral DNAs.</text>
</comment>
<comment type="miscellaneous">
    <molecule>Isoform Gag-Pol polyprotein</molecule>
    <text>Produced by -1 ribosomal frameshifting.</text>
</comment>